<name>TRM1_PYRAB</name>
<organism>
    <name type="scientific">Pyrococcus abyssi (strain GE5 / Orsay)</name>
    <dbReference type="NCBI Taxonomy" id="272844"/>
    <lineage>
        <taxon>Archaea</taxon>
        <taxon>Methanobacteriati</taxon>
        <taxon>Methanobacteriota</taxon>
        <taxon>Thermococci</taxon>
        <taxon>Thermococcales</taxon>
        <taxon>Thermococcaceae</taxon>
        <taxon>Pyrococcus</taxon>
    </lineage>
</organism>
<dbReference type="EC" id="2.1.1.216" evidence="1"/>
<dbReference type="EMBL" id="AJ248284">
    <property type="protein sequence ID" value="CAB49306.1"/>
    <property type="status" value="ALT_INIT"/>
    <property type="molecule type" value="Genomic_DNA"/>
</dbReference>
<dbReference type="EMBL" id="HE613800">
    <property type="protein sequence ID" value="CCE69762.1"/>
    <property type="molecule type" value="Genomic_DNA"/>
</dbReference>
<dbReference type="PIR" id="C75153">
    <property type="entry name" value="C75153"/>
</dbReference>
<dbReference type="RefSeq" id="WP_048146544.1">
    <property type="nucleotide sequence ID" value="NC_000868.1"/>
</dbReference>
<dbReference type="SMR" id="Q9V1P3"/>
<dbReference type="STRING" id="272844.PAB2092"/>
<dbReference type="KEGG" id="pab:PAB2092"/>
<dbReference type="PATRIC" id="fig|272844.11.peg.405"/>
<dbReference type="eggNOG" id="arCOG01219">
    <property type="taxonomic scope" value="Archaea"/>
</dbReference>
<dbReference type="HOGENOM" id="CLU_010862_5_1_2"/>
<dbReference type="OrthoDB" id="372177at2157"/>
<dbReference type="Proteomes" id="UP000000810">
    <property type="component" value="Chromosome"/>
</dbReference>
<dbReference type="Proteomes" id="UP000009139">
    <property type="component" value="Chromosome"/>
</dbReference>
<dbReference type="GO" id="GO:0160104">
    <property type="term" value="F:tRNA (guanine(26)-N2)-dimethyltransferase activity"/>
    <property type="evidence" value="ECO:0007669"/>
    <property type="project" value="UniProtKB-UniRule"/>
</dbReference>
<dbReference type="GO" id="GO:0000049">
    <property type="term" value="F:tRNA binding"/>
    <property type="evidence" value="ECO:0007669"/>
    <property type="project" value="UniProtKB-KW"/>
</dbReference>
<dbReference type="GO" id="GO:0002940">
    <property type="term" value="P:tRNA N2-guanine methylation"/>
    <property type="evidence" value="ECO:0007669"/>
    <property type="project" value="TreeGrafter"/>
</dbReference>
<dbReference type="CDD" id="cd02440">
    <property type="entry name" value="AdoMet_MTases"/>
    <property type="match status" value="1"/>
</dbReference>
<dbReference type="FunFam" id="3.30.56.70:FF:000001">
    <property type="entry name" value="tRNA (guanine(26)-N(2))-dimethyltransferase"/>
    <property type="match status" value="1"/>
</dbReference>
<dbReference type="FunFam" id="3.40.50.150:FF:000272">
    <property type="entry name" value="tRNA (guanine(26)-N(2))-dimethyltransferase"/>
    <property type="match status" value="1"/>
</dbReference>
<dbReference type="Gene3D" id="3.30.56.70">
    <property type="entry name" value="N2,N2-dimethylguanosine tRNA methyltransferase, C-terminal domain"/>
    <property type="match status" value="1"/>
</dbReference>
<dbReference type="Gene3D" id="3.40.50.150">
    <property type="entry name" value="Vaccinia Virus protein VP39"/>
    <property type="match status" value="1"/>
</dbReference>
<dbReference type="HAMAP" id="MF_00290">
    <property type="entry name" value="tRNA_dimethyltr_TRM1"/>
    <property type="match status" value="1"/>
</dbReference>
<dbReference type="InterPro" id="IPR029063">
    <property type="entry name" value="SAM-dependent_MTases_sf"/>
</dbReference>
<dbReference type="InterPro" id="IPR002905">
    <property type="entry name" value="Trm1"/>
</dbReference>
<dbReference type="InterPro" id="IPR022923">
    <property type="entry name" value="TRM1_arc_bac"/>
</dbReference>
<dbReference type="InterPro" id="IPR042296">
    <property type="entry name" value="tRNA_met_Trm1_C"/>
</dbReference>
<dbReference type="NCBIfam" id="TIGR00308">
    <property type="entry name" value="TRM1"/>
    <property type="match status" value="1"/>
</dbReference>
<dbReference type="PANTHER" id="PTHR10631">
    <property type="entry name" value="N 2 ,N 2 -DIMETHYLGUANOSINE TRNA METHYLTRANSFERASE"/>
    <property type="match status" value="1"/>
</dbReference>
<dbReference type="PANTHER" id="PTHR10631:SF3">
    <property type="entry name" value="TRNA (GUANINE(26)-N(2))-DIMETHYLTRANSFERASE"/>
    <property type="match status" value="1"/>
</dbReference>
<dbReference type="Pfam" id="PF02005">
    <property type="entry name" value="TRM"/>
    <property type="match status" value="1"/>
</dbReference>
<dbReference type="SUPFAM" id="SSF53335">
    <property type="entry name" value="S-adenosyl-L-methionine-dependent methyltransferases"/>
    <property type="match status" value="1"/>
</dbReference>
<dbReference type="PROSITE" id="PS51626">
    <property type="entry name" value="SAM_MT_TRM1"/>
    <property type="match status" value="1"/>
</dbReference>
<keyword id="KW-0489">Methyltransferase</keyword>
<keyword id="KW-0694">RNA-binding</keyword>
<keyword id="KW-0949">S-adenosyl-L-methionine</keyword>
<keyword id="KW-0808">Transferase</keyword>
<keyword id="KW-0819">tRNA processing</keyword>
<keyword id="KW-0820">tRNA-binding</keyword>
<feature type="chain" id="PRO_0000147687" description="tRNA (guanine(26)-N(2))-dimethyltransferase">
    <location>
        <begin position="1"/>
        <end position="379"/>
    </location>
</feature>
<feature type="domain" description="Trm1 methyltransferase" evidence="1">
    <location>
        <begin position="4"/>
        <end position="375"/>
    </location>
</feature>
<feature type="binding site" evidence="1">
    <location>
        <position position="36"/>
    </location>
    <ligand>
        <name>S-adenosyl-L-methionine</name>
        <dbReference type="ChEBI" id="CHEBI:59789"/>
    </ligand>
</feature>
<feature type="binding site" evidence="1">
    <location>
        <position position="61"/>
    </location>
    <ligand>
        <name>S-adenosyl-L-methionine</name>
        <dbReference type="ChEBI" id="CHEBI:59789"/>
    </ligand>
</feature>
<feature type="binding site" evidence="1">
    <location>
        <position position="78"/>
    </location>
    <ligand>
        <name>S-adenosyl-L-methionine</name>
        <dbReference type="ChEBI" id="CHEBI:59789"/>
    </ligand>
</feature>
<feature type="binding site" evidence="1">
    <location>
        <position position="120"/>
    </location>
    <ligand>
        <name>S-adenosyl-L-methionine</name>
        <dbReference type="ChEBI" id="CHEBI:59789"/>
    </ligand>
</feature>
<feature type="binding site" evidence="1">
    <location>
        <position position="121"/>
    </location>
    <ligand>
        <name>S-adenosyl-L-methionine</name>
        <dbReference type="ChEBI" id="CHEBI:59789"/>
    </ligand>
</feature>
<reference key="1">
    <citation type="journal article" date="2003" name="Mol. Microbiol.">
        <title>An integrated analysis of the genome of the hyperthermophilic archaeon Pyrococcus abyssi.</title>
        <authorList>
            <person name="Cohen G.N."/>
            <person name="Barbe V."/>
            <person name="Flament D."/>
            <person name="Galperin M."/>
            <person name="Heilig R."/>
            <person name="Lecompte O."/>
            <person name="Poch O."/>
            <person name="Prieur D."/>
            <person name="Querellou J."/>
            <person name="Ripp R."/>
            <person name="Thierry J.-C."/>
            <person name="Van der Oost J."/>
            <person name="Weissenbach J."/>
            <person name="Zivanovic Y."/>
            <person name="Forterre P."/>
        </authorList>
    </citation>
    <scope>NUCLEOTIDE SEQUENCE [LARGE SCALE GENOMIC DNA]</scope>
    <source>
        <strain>GE5 / Orsay</strain>
    </source>
</reference>
<reference key="2">
    <citation type="journal article" date="2012" name="Curr. Microbiol.">
        <title>Re-annotation of two hyperthermophilic archaea Pyrococcus abyssi GE5 and Pyrococcus furiosus DSM 3638.</title>
        <authorList>
            <person name="Gao J."/>
            <person name="Wang J."/>
        </authorList>
    </citation>
    <scope>GENOME REANNOTATION</scope>
    <source>
        <strain>GE5 / Orsay</strain>
    </source>
</reference>
<evidence type="ECO:0000255" key="1">
    <source>
        <dbReference type="HAMAP-Rule" id="MF_00290"/>
    </source>
</evidence>
<evidence type="ECO:0000305" key="2"/>
<accession>Q9V1P3</accession>
<accession>G8ZI19</accession>
<comment type="function">
    <text evidence="1">Dimethylates a single guanine residue at position 26 of a number of tRNAs using S-adenosyl-L-methionine as donor of the methyl groups.</text>
</comment>
<comment type="catalytic activity">
    <reaction evidence="1">
        <text>guanosine(26) in tRNA + 2 S-adenosyl-L-methionine = N(2)-dimethylguanosine(26) in tRNA + 2 S-adenosyl-L-homocysteine + 2 H(+)</text>
        <dbReference type="Rhea" id="RHEA:43140"/>
        <dbReference type="Rhea" id="RHEA-COMP:10359"/>
        <dbReference type="Rhea" id="RHEA-COMP:10360"/>
        <dbReference type="ChEBI" id="CHEBI:15378"/>
        <dbReference type="ChEBI" id="CHEBI:57856"/>
        <dbReference type="ChEBI" id="CHEBI:59789"/>
        <dbReference type="ChEBI" id="CHEBI:74269"/>
        <dbReference type="ChEBI" id="CHEBI:74513"/>
        <dbReference type="EC" id="2.1.1.216"/>
    </reaction>
</comment>
<comment type="similarity">
    <text evidence="1">Belongs to the class I-like SAM-binding methyltransferase superfamily. Trm1 family.</text>
</comment>
<comment type="sequence caution" evidence="2">
    <conflict type="erroneous initiation">
        <sequence resource="EMBL-CDS" id="CAB49306"/>
    </conflict>
    <text>Extended N-terminus.</text>
</comment>
<gene>
    <name evidence="1" type="primary">trm1</name>
    <name type="ordered locus">PYRAB03840</name>
    <name type="ORF">PAB2092</name>
</gene>
<sequence>MELVEVLEGKAKILTPKAESIYDAPVFYNPRMALNRDIAVVLLNVLKPRIVLDALSATGIRGIRFALETPAEEIWMNDISEDAYNLMKKNVLLNFKGELEESNGRAVLKSEKTLVVNHDDANRLMAEKHRYFHFIDLDPFGSPMEFLDTALRSVKRKGILGITATDGAPLCGAHPKACMRKYLAVPLRGELCHEVGTRILVGVVARYAAKYDLGIEVILAYYKDHYFRAFIKLKDGARKGDESLENLGYIYFDESTGKFEVERSFLPSKPNAYGPVWLGPLKSQEIVEEMLEISQQLSLARKKQAVKLLKILKDELDVPLFYDTHGLGRRLKIEARKIEEIINELRSLGYRASRTHFSPTGVKTDAPYEVFVNVLSSAK</sequence>
<proteinExistence type="inferred from homology"/>
<protein>
    <recommendedName>
        <fullName evidence="1">tRNA (guanine(26)-N(2))-dimethyltransferase</fullName>
        <ecNumber evidence="1">2.1.1.216</ecNumber>
    </recommendedName>
    <alternativeName>
        <fullName evidence="1">tRNA 2,2-dimethylguanosine-26 methyltransferase</fullName>
    </alternativeName>
    <alternativeName>
        <fullName evidence="1">tRNA(guanine-26,N(2)-N(2)) methyltransferase</fullName>
    </alternativeName>
    <alternativeName>
        <fullName evidence="1">tRNA(m(2,2)G26)dimethyltransferase</fullName>
    </alternativeName>
</protein>